<organism>
    <name type="scientific">Spirodela polyrhiza</name>
    <name type="common">Giant duckweed</name>
    <name type="synonym">Lemna polyrhiza</name>
    <dbReference type="NCBI Taxonomy" id="29656"/>
    <lineage>
        <taxon>Eukaryota</taxon>
        <taxon>Viridiplantae</taxon>
        <taxon>Streptophyta</taxon>
        <taxon>Embryophyta</taxon>
        <taxon>Tracheophyta</taxon>
        <taxon>Spermatophyta</taxon>
        <taxon>Magnoliopsida</taxon>
        <taxon>Liliopsida</taxon>
        <taxon>Araceae</taxon>
        <taxon>Lemnoideae</taxon>
        <taxon>Spirodela</taxon>
    </lineage>
</organism>
<protein>
    <recommendedName>
        <fullName>Inositol-3-phosphate synthase</fullName>
        <shortName>MIP synthase</shortName>
        <ecNumber evidence="2">5.5.1.4</ecNumber>
    </recommendedName>
    <alternativeName>
        <fullName>Myo-inositol 1-phosphate synthase</fullName>
        <shortName>IPS</shortName>
        <shortName>MI-1-P synthase</shortName>
    </alternativeName>
</protein>
<name>INO1_SPIPO</name>
<comment type="function">
    <text evidence="2">Key enzyme in myo-inositol biosynthesis pathway that catalyzes the conversion of glucose 6-phosphate to 1-myo-inositol 1-phosphate in a NAD-dependent manner.</text>
</comment>
<comment type="catalytic activity">
    <reaction evidence="2">
        <text>D-glucose 6-phosphate = 1D-myo-inositol 3-phosphate</text>
        <dbReference type="Rhea" id="RHEA:10716"/>
        <dbReference type="ChEBI" id="CHEBI:58401"/>
        <dbReference type="ChEBI" id="CHEBI:61548"/>
        <dbReference type="EC" id="5.5.1.4"/>
    </reaction>
</comment>
<comment type="cofactor">
    <cofactor evidence="2">
        <name>NAD(+)</name>
        <dbReference type="ChEBI" id="CHEBI:57540"/>
    </cofactor>
</comment>
<comment type="pathway">
    <text>Polyol metabolism; myo-inositol biosynthesis; myo-inositol from D-glucose 6-phosphate: step 1/2.</text>
</comment>
<comment type="subcellular location">
    <subcellularLocation>
        <location evidence="2">Cytoplasm</location>
        <location evidence="2">Cytosol</location>
    </subcellularLocation>
    <subcellularLocation>
        <location evidence="2">Nucleus</location>
    </subcellularLocation>
</comment>
<comment type="induction">
    <text>By abscisic acid (ABA).</text>
</comment>
<comment type="similarity">
    <text evidence="3">Belongs to the myo-inositol 1-phosphate synthase family.</text>
</comment>
<sequence length="510" mass="56386">MFIEKFRVESPNVKYGDGEIESVYSYETTELVHEVRNGSYQWVVKPKSVQYQFKTDTRVPRLGVMLVGWGGNNGSTLTAGVIANREGISWVTKEKVQQANYFGSLTQSSSIRVGSFNGEEIYAPFKSLLPMVNPDEIVFGGWDISDMNLADAMGRAKVLDIDLQKQLRPYMESMVPLPGIYNPDFIAANQGSRANNVIKGPKKQQVQRIIDDIREFKEREKVEKVVVLWTANTERYSDLVVGLNDTMENLLAAVERDEAEISPSSLYALACIMEGVPFVNGSPQNTFVPGLIEMAIKRNSLIGGDDFKSGQTKMKSVLVDFLVGAGIKPTSIVSYNHLGNNDGMNLSAPQTFRSKEISKSNVVDDMVSSNGILYEPGEHPDHVIVIKYVPYVGDSKRAMDEYTSEIFMGGKSTIILHNTCEDSLLAAPIILDLVLLAELSTRIQLKAEGESKFHSFHPVASILSYLSKAPLVPPGTPVVNALSKQRAMLENILRACVGLAPENNMILEYK</sequence>
<feature type="chain" id="PRO_0000195198" description="Inositol-3-phosphate synthase">
    <location>
        <begin position="1"/>
        <end position="510"/>
    </location>
</feature>
<feature type="binding site" evidence="1">
    <location>
        <position position="70"/>
    </location>
    <ligand>
        <name>NAD(+)</name>
        <dbReference type="ChEBI" id="CHEBI:57540"/>
    </ligand>
</feature>
<feature type="binding site" evidence="1">
    <location>
        <position position="71"/>
    </location>
    <ligand>
        <name>NAD(+)</name>
        <dbReference type="ChEBI" id="CHEBI:57540"/>
    </ligand>
</feature>
<feature type="binding site" evidence="1">
    <location>
        <position position="72"/>
    </location>
    <ligand>
        <name>NAD(+)</name>
        <dbReference type="ChEBI" id="CHEBI:57540"/>
    </ligand>
</feature>
<feature type="binding site" evidence="1">
    <location>
        <position position="73"/>
    </location>
    <ligand>
        <name>NAD(+)</name>
        <dbReference type="ChEBI" id="CHEBI:57540"/>
    </ligand>
</feature>
<feature type="binding site" evidence="1">
    <location>
        <position position="143"/>
    </location>
    <ligand>
        <name>NAD(+)</name>
        <dbReference type="ChEBI" id="CHEBI:57540"/>
    </ligand>
</feature>
<feature type="binding site" evidence="1">
    <location>
        <position position="180"/>
    </location>
    <ligand>
        <name>NAD(+)</name>
        <dbReference type="ChEBI" id="CHEBI:57540"/>
    </ligand>
</feature>
<feature type="binding site" evidence="1">
    <location>
        <position position="190"/>
    </location>
    <ligand>
        <name>NAD(+)</name>
        <dbReference type="ChEBI" id="CHEBI:57540"/>
    </ligand>
</feature>
<feature type="binding site" evidence="1">
    <location>
        <position position="193"/>
    </location>
    <ligand>
        <name>NAD(+)</name>
        <dbReference type="ChEBI" id="CHEBI:57540"/>
    </ligand>
</feature>
<feature type="binding site" evidence="1">
    <location>
        <position position="230"/>
    </location>
    <ligand>
        <name>NAD(+)</name>
        <dbReference type="ChEBI" id="CHEBI:57540"/>
    </ligand>
</feature>
<feature type="binding site" evidence="1">
    <location>
        <position position="231"/>
    </location>
    <ligand>
        <name>NAD(+)</name>
        <dbReference type="ChEBI" id="CHEBI:57540"/>
    </ligand>
</feature>
<feature type="binding site" evidence="1">
    <location>
        <position position="232"/>
    </location>
    <ligand>
        <name>NAD(+)</name>
        <dbReference type="ChEBI" id="CHEBI:57540"/>
    </ligand>
</feature>
<feature type="binding site" evidence="1">
    <location>
        <position position="233"/>
    </location>
    <ligand>
        <name>NAD(+)</name>
        <dbReference type="ChEBI" id="CHEBI:57540"/>
    </ligand>
</feature>
<feature type="binding site" evidence="1">
    <location>
        <position position="281"/>
    </location>
    <ligand>
        <name>NAD(+)</name>
        <dbReference type="ChEBI" id="CHEBI:57540"/>
    </ligand>
</feature>
<feature type="binding site" evidence="1">
    <location>
        <position position="282"/>
    </location>
    <ligand>
        <name>NAD(+)</name>
        <dbReference type="ChEBI" id="CHEBI:57540"/>
    </ligand>
</feature>
<feature type="binding site" evidence="1">
    <location>
        <position position="306"/>
    </location>
    <ligand>
        <name>NAD(+)</name>
        <dbReference type="ChEBI" id="CHEBI:57540"/>
    </ligand>
</feature>
<feature type="binding site" evidence="1">
    <location>
        <position position="309"/>
    </location>
    <ligand>
        <name>NAD(+)</name>
        <dbReference type="ChEBI" id="CHEBI:57540"/>
    </ligand>
</feature>
<feature type="binding site" evidence="1">
    <location>
        <position position="340"/>
    </location>
    <ligand>
        <name>NAD(+)</name>
        <dbReference type="ChEBI" id="CHEBI:57540"/>
    </ligand>
</feature>
<feature type="binding site" evidence="1">
    <location>
        <position position="341"/>
    </location>
    <ligand>
        <name>NAD(+)</name>
        <dbReference type="ChEBI" id="CHEBI:57540"/>
    </ligand>
</feature>
<feature type="binding site" evidence="1">
    <location>
        <position position="342"/>
    </location>
    <ligand>
        <name>NAD(+)</name>
        <dbReference type="ChEBI" id="CHEBI:57540"/>
    </ligand>
</feature>
<feature type="binding site" evidence="1">
    <location>
        <position position="355"/>
    </location>
    <ligand>
        <name>NAD(+)</name>
        <dbReference type="ChEBI" id="CHEBI:57540"/>
    </ligand>
</feature>
<feature type="binding site" evidence="1">
    <location>
        <position position="393"/>
    </location>
    <ligand>
        <name>NAD(+)</name>
        <dbReference type="ChEBI" id="CHEBI:57540"/>
    </ligand>
</feature>
<feature type="binding site" evidence="1">
    <location>
        <position position="394"/>
    </location>
    <ligand>
        <name>NAD(+)</name>
        <dbReference type="ChEBI" id="CHEBI:57540"/>
    </ligand>
</feature>
<feature type="binding site" evidence="1">
    <location>
        <position position="422"/>
    </location>
    <ligand>
        <name>NAD(+)</name>
        <dbReference type="ChEBI" id="CHEBI:57540"/>
    </ligand>
</feature>
<feature type="binding site" evidence="1">
    <location>
        <position position="423"/>
    </location>
    <ligand>
        <name>NAD(+)</name>
        <dbReference type="ChEBI" id="CHEBI:57540"/>
    </ligand>
</feature>
<reference key="1">
    <citation type="journal article" date="1993" name="Plant J.">
        <title>A plant gene with homology to D-myo-inositol-3-phosphate synthase is rapidly and spatially up-regulated during an abscisic-acid-induced morphogenic response in Spirodela polyrrhiza.</title>
        <authorList>
            <person name="Smart C.C."/>
            <person name="Fleming A.J."/>
        </authorList>
    </citation>
    <scope>NUCLEOTIDE SEQUENCE [MRNA]</scope>
</reference>
<proteinExistence type="evidence at transcript level"/>
<keyword id="KW-0963">Cytoplasm</keyword>
<keyword id="KW-0398">Inositol biosynthesis</keyword>
<keyword id="KW-0413">Isomerase</keyword>
<keyword id="KW-0444">Lipid biosynthesis</keyword>
<keyword id="KW-0443">Lipid metabolism</keyword>
<keyword id="KW-0520">NAD</keyword>
<keyword id="KW-0539">Nucleus</keyword>
<keyword id="KW-0594">Phospholipid biosynthesis</keyword>
<keyword id="KW-1208">Phospholipid metabolism</keyword>
<gene>
    <name type="primary">TUR1</name>
</gene>
<dbReference type="EC" id="5.5.1.4" evidence="2"/>
<dbReference type="EMBL" id="Z11693">
    <property type="protein sequence ID" value="CAA77751.1"/>
    <property type="molecule type" value="mRNA"/>
</dbReference>
<dbReference type="PIR" id="S60302">
    <property type="entry name" value="S60302"/>
</dbReference>
<dbReference type="SMR" id="P42803"/>
<dbReference type="UniPathway" id="UPA00823">
    <property type="reaction ID" value="UER00787"/>
</dbReference>
<dbReference type="GO" id="GO:0005829">
    <property type="term" value="C:cytosol"/>
    <property type="evidence" value="ECO:0007669"/>
    <property type="project" value="UniProtKB-SubCell"/>
</dbReference>
<dbReference type="GO" id="GO:0005634">
    <property type="term" value="C:nucleus"/>
    <property type="evidence" value="ECO:0007669"/>
    <property type="project" value="UniProtKB-SubCell"/>
</dbReference>
<dbReference type="GO" id="GO:0004512">
    <property type="term" value="F:inositol-3-phosphate synthase activity"/>
    <property type="evidence" value="ECO:0007669"/>
    <property type="project" value="UniProtKB-EC"/>
</dbReference>
<dbReference type="GO" id="GO:0006021">
    <property type="term" value="P:inositol biosynthetic process"/>
    <property type="evidence" value="ECO:0007669"/>
    <property type="project" value="UniProtKB-UniPathway"/>
</dbReference>
<dbReference type="GO" id="GO:0008654">
    <property type="term" value="P:phospholipid biosynthetic process"/>
    <property type="evidence" value="ECO:0007669"/>
    <property type="project" value="UniProtKB-KW"/>
</dbReference>
<dbReference type="FunFam" id="3.40.50.720:FF:000107">
    <property type="entry name" value="inositol-3-phosphate synthase"/>
    <property type="match status" value="1"/>
</dbReference>
<dbReference type="FunFam" id="3.40.50.720:FF:000069">
    <property type="entry name" value="Inositol-3-phosphate synthase 1"/>
    <property type="match status" value="1"/>
</dbReference>
<dbReference type="FunFam" id="3.30.360.10:FF:000055">
    <property type="entry name" value="Putative myo-inositol-1-phosphate synthase"/>
    <property type="match status" value="1"/>
</dbReference>
<dbReference type="Gene3D" id="3.40.50.720">
    <property type="entry name" value="NAD(P)-binding Rossmann-like Domain"/>
    <property type="match status" value="2"/>
</dbReference>
<dbReference type="InterPro" id="IPR002587">
    <property type="entry name" value="Myo-inos-1-P_Synthase"/>
</dbReference>
<dbReference type="InterPro" id="IPR013021">
    <property type="entry name" value="Myo-inos-1-P_Synthase_GAPDH"/>
</dbReference>
<dbReference type="InterPro" id="IPR036291">
    <property type="entry name" value="NAD(P)-bd_dom_sf"/>
</dbReference>
<dbReference type="PANTHER" id="PTHR11510">
    <property type="entry name" value="MYO-INOSITOL-1 PHOSPHATE SYNTHASE"/>
    <property type="match status" value="1"/>
</dbReference>
<dbReference type="Pfam" id="PF01658">
    <property type="entry name" value="Inos-1-P_synth"/>
    <property type="match status" value="1"/>
</dbReference>
<dbReference type="Pfam" id="PF07994">
    <property type="entry name" value="NAD_binding_5"/>
    <property type="match status" value="1"/>
</dbReference>
<dbReference type="PIRSF" id="PIRSF015578">
    <property type="entry name" value="Myoinos-ppht_syn"/>
    <property type="match status" value="1"/>
</dbReference>
<dbReference type="SUPFAM" id="SSF55347">
    <property type="entry name" value="Glyceraldehyde-3-phosphate dehydrogenase-like, C-terminal domain"/>
    <property type="match status" value="1"/>
</dbReference>
<dbReference type="SUPFAM" id="SSF51735">
    <property type="entry name" value="NAD(P)-binding Rossmann-fold domains"/>
    <property type="match status" value="1"/>
</dbReference>
<evidence type="ECO:0000250" key="1">
    <source>
        <dbReference type="UniProtKB" id="P11986"/>
    </source>
</evidence>
<evidence type="ECO:0000250" key="2">
    <source>
        <dbReference type="UniProtKB" id="P42801"/>
    </source>
</evidence>
<evidence type="ECO:0000305" key="3"/>
<accession>P42803</accession>